<feature type="chain" id="PRO_0000331189" description="Spermidine export protein MdtJ">
    <location>
        <begin position="1"/>
        <end position="147"/>
    </location>
</feature>
<feature type="transmembrane region" description="Helical" evidence="1">
    <location>
        <begin position="1"/>
        <end position="21"/>
    </location>
</feature>
<feature type="transmembrane region" description="Helical" evidence="1">
    <location>
        <begin position="31"/>
        <end position="51"/>
    </location>
</feature>
<feature type="transmembrane region" description="Helical" evidence="1">
    <location>
        <begin position="54"/>
        <end position="74"/>
    </location>
</feature>
<feature type="transmembrane region" description="Helical" evidence="1">
    <location>
        <begin position="81"/>
        <end position="101"/>
    </location>
</feature>
<feature type="region of interest" description="Disordered" evidence="2">
    <location>
        <begin position="105"/>
        <end position="147"/>
    </location>
</feature>
<organism>
    <name type="scientific">Yersinia pestis (strain Pestoides F)</name>
    <dbReference type="NCBI Taxonomy" id="386656"/>
    <lineage>
        <taxon>Bacteria</taxon>
        <taxon>Pseudomonadati</taxon>
        <taxon>Pseudomonadota</taxon>
        <taxon>Gammaproteobacteria</taxon>
        <taxon>Enterobacterales</taxon>
        <taxon>Yersiniaceae</taxon>
        <taxon>Yersinia</taxon>
    </lineage>
</organism>
<dbReference type="EMBL" id="CP000668">
    <property type="protein sequence ID" value="ABP39452.1"/>
    <property type="molecule type" value="Genomic_DNA"/>
</dbReference>
<dbReference type="RefSeq" id="WP_002211188.1">
    <property type="nucleotide sequence ID" value="NZ_CP009715.1"/>
</dbReference>
<dbReference type="SMR" id="A4TJJ0"/>
<dbReference type="GeneID" id="57976593"/>
<dbReference type="KEGG" id="ypp:YPDSF_1054"/>
<dbReference type="PATRIC" id="fig|386656.14.peg.2780"/>
<dbReference type="GO" id="GO:0005886">
    <property type="term" value="C:plasma membrane"/>
    <property type="evidence" value="ECO:0007669"/>
    <property type="project" value="UniProtKB-SubCell"/>
</dbReference>
<dbReference type="GO" id="GO:0015199">
    <property type="term" value="F:amino-acid betaine transmembrane transporter activity"/>
    <property type="evidence" value="ECO:0007669"/>
    <property type="project" value="TreeGrafter"/>
</dbReference>
<dbReference type="GO" id="GO:0015297">
    <property type="term" value="F:antiporter activity"/>
    <property type="evidence" value="ECO:0007669"/>
    <property type="project" value="TreeGrafter"/>
</dbReference>
<dbReference type="GO" id="GO:0015220">
    <property type="term" value="F:choline transmembrane transporter activity"/>
    <property type="evidence" value="ECO:0007669"/>
    <property type="project" value="TreeGrafter"/>
</dbReference>
<dbReference type="GO" id="GO:0015606">
    <property type="term" value="F:spermidine transmembrane transporter activity"/>
    <property type="evidence" value="ECO:0007669"/>
    <property type="project" value="UniProtKB-UniRule"/>
</dbReference>
<dbReference type="GO" id="GO:0031460">
    <property type="term" value="P:glycine betaine transport"/>
    <property type="evidence" value="ECO:0007669"/>
    <property type="project" value="TreeGrafter"/>
</dbReference>
<dbReference type="FunFam" id="1.10.3730.20:FF:000001">
    <property type="entry name" value="Quaternary ammonium compound resistance transporter SugE"/>
    <property type="match status" value="1"/>
</dbReference>
<dbReference type="Gene3D" id="1.10.3730.20">
    <property type="match status" value="1"/>
</dbReference>
<dbReference type="HAMAP" id="MF_01598">
    <property type="entry name" value="MdtJ"/>
    <property type="match status" value="1"/>
</dbReference>
<dbReference type="InterPro" id="IPR000390">
    <property type="entry name" value="Small_drug/metabolite_transptr"/>
</dbReference>
<dbReference type="InterPro" id="IPR045324">
    <property type="entry name" value="Small_multidrug_res"/>
</dbReference>
<dbReference type="InterPro" id="IPR023740">
    <property type="entry name" value="Spermidine_export_MdtJ"/>
</dbReference>
<dbReference type="NCBIfam" id="NF007767">
    <property type="entry name" value="PRK10452.1"/>
    <property type="match status" value="1"/>
</dbReference>
<dbReference type="PANTHER" id="PTHR30561">
    <property type="entry name" value="SMR FAMILY PROTON-DEPENDENT DRUG EFFLUX TRANSPORTER SUGE"/>
    <property type="match status" value="1"/>
</dbReference>
<dbReference type="PANTHER" id="PTHR30561:SF2">
    <property type="entry name" value="SPERMIDINE EXPORT PROTEIN MDTJ"/>
    <property type="match status" value="1"/>
</dbReference>
<dbReference type="Pfam" id="PF00893">
    <property type="entry name" value="Multi_Drug_Res"/>
    <property type="match status" value="1"/>
</dbReference>
<dbReference type="SUPFAM" id="SSF103481">
    <property type="entry name" value="Multidrug resistance efflux transporter EmrE"/>
    <property type="match status" value="1"/>
</dbReference>
<name>MDTJ_YERPP</name>
<keyword id="KW-0997">Cell inner membrane</keyword>
<keyword id="KW-1003">Cell membrane</keyword>
<keyword id="KW-0472">Membrane</keyword>
<keyword id="KW-0812">Transmembrane</keyword>
<keyword id="KW-1133">Transmembrane helix</keyword>
<keyword id="KW-0813">Transport</keyword>
<protein>
    <recommendedName>
        <fullName evidence="1">Spermidine export protein MdtJ</fullName>
    </recommendedName>
</protein>
<gene>
    <name evidence="1" type="primary">mdtJ</name>
    <name type="ordered locus">YPDSF_1054</name>
</gene>
<evidence type="ECO:0000255" key="1">
    <source>
        <dbReference type="HAMAP-Rule" id="MF_01598"/>
    </source>
</evidence>
<evidence type="ECO:0000256" key="2">
    <source>
        <dbReference type="SAM" id="MobiDB-lite"/>
    </source>
</evidence>
<sequence length="147" mass="15852">MIYWIFLGLAIIAEIIGTLSMKYASVSGEMTGHIVMYFMITGSYVMLSLAVKKVALGVAYALWEGIGILIITIFSVMWFGETLSPLKIAGLVTLIGGILLVKSGTRKPKQPNCHRGNRPPSVQELKTQTTGHHKGVAVESGEHHAAA</sequence>
<reference key="1">
    <citation type="submission" date="2007-02" db="EMBL/GenBank/DDBJ databases">
        <title>Complete sequence of chromosome of Yersinia pestis Pestoides F.</title>
        <authorList>
            <consortium name="US DOE Joint Genome Institute"/>
            <person name="Copeland A."/>
            <person name="Lucas S."/>
            <person name="Lapidus A."/>
            <person name="Barry K."/>
            <person name="Detter J.C."/>
            <person name="Glavina del Rio T."/>
            <person name="Hammon N."/>
            <person name="Israni S."/>
            <person name="Dalin E."/>
            <person name="Tice H."/>
            <person name="Pitluck S."/>
            <person name="Di Bartolo G."/>
            <person name="Chain P."/>
            <person name="Malfatti S."/>
            <person name="Shin M."/>
            <person name="Vergez L."/>
            <person name="Schmutz J."/>
            <person name="Larimer F."/>
            <person name="Land M."/>
            <person name="Hauser L."/>
            <person name="Worsham P."/>
            <person name="Chu M."/>
            <person name="Bearden S."/>
            <person name="Garcia E."/>
            <person name="Richardson P."/>
        </authorList>
    </citation>
    <scope>NUCLEOTIDE SEQUENCE [LARGE SCALE GENOMIC DNA]</scope>
    <source>
        <strain>Pestoides F</strain>
    </source>
</reference>
<proteinExistence type="inferred from homology"/>
<accession>A4TJJ0</accession>
<comment type="function">
    <text evidence="1">Catalyzes the excretion of spermidine.</text>
</comment>
<comment type="subunit">
    <text evidence="1">Forms a complex with MdtI.</text>
</comment>
<comment type="subcellular location">
    <subcellularLocation>
        <location evidence="1">Cell inner membrane</location>
        <topology evidence="1">Multi-pass membrane protein</topology>
    </subcellularLocation>
</comment>
<comment type="similarity">
    <text evidence="1">Belongs to the drug/metabolite transporter (DMT) superfamily. Small multidrug resistance (SMR) (TC 2.A.7.1) family. MdtJ subfamily.</text>
</comment>